<name>EFTS_TOLAT</name>
<keyword id="KW-0963">Cytoplasm</keyword>
<keyword id="KW-0251">Elongation factor</keyword>
<keyword id="KW-0648">Protein biosynthesis</keyword>
<keyword id="KW-1185">Reference proteome</keyword>
<dbReference type="EMBL" id="CP001616">
    <property type="protein sequence ID" value="ACQ93709.1"/>
    <property type="molecule type" value="Genomic_DNA"/>
</dbReference>
<dbReference type="RefSeq" id="WP_015879177.1">
    <property type="nucleotide sequence ID" value="NC_012691.1"/>
</dbReference>
<dbReference type="SMR" id="C4L863"/>
<dbReference type="STRING" id="595494.Tola_2110"/>
<dbReference type="KEGG" id="tau:Tola_2110"/>
<dbReference type="eggNOG" id="COG0264">
    <property type="taxonomic scope" value="Bacteria"/>
</dbReference>
<dbReference type="HOGENOM" id="CLU_047155_0_2_6"/>
<dbReference type="OrthoDB" id="9808348at2"/>
<dbReference type="Proteomes" id="UP000009073">
    <property type="component" value="Chromosome"/>
</dbReference>
<dbReference type="GO" id="GO:0005737">
    <property type="term" value="C:cytoplasm"/>
    <property type="evidence" value="ECO:0007669"/>
    <property type="project" value="UniProtKB-SubCell"/>
</dbReference>
<dbReference type="GO" id="GO:0003746">
    <property type="term" value="F:translation elongation factor activity"/>
    <property type="evidence" value="ECO:0007669"/>
    <property type="project" value="UniProtKB-UniRule"/>
</dbReference>
<dbReference type="CDD" id="cd14275">
    <property type="entry name" value="UBA_EF-Ts"/>
    <property type="match status" value="1"/>
</dbReference>
<dbReference type="FunFam" id="1.10.286.20:FF:000001">
    <property type="entry name" value="Elongation factor Ts"/>
    <property type="match status" value="1"/>
</dbReference>
<dbReference type="FunFam" id="1.10.8.10:FF:000001">
    <property type="entry name" value="Elongation factor Ts"/>
    <property type="match status" value="1"/>
</dbReference>
<dbReference type="FunFam" id="3.30.479.20:FF:000001">
    <property type="entry name" value="Elongation factor Ts"/>
    <property type="match status" value="1"/>
</dbReference>
<dbReference type="Gene3D" id="1.10.286.20">
    <property type="match status" value="1"/>
</dbReference>
<dbReference type="Gene3D" id="1.10.8.10">
    <property type="entry name" value="DNA helicase RuvA subunit, C-terminal domain"/>
    <property type="match status" value="1"/>
</dbReference>
<dbReference type="Gene3D" id="3.30.479.20">
    <property type="entry name" value="Elongation factor Ts, dimerisation domain"/>
    <property type="match status" value="2"/>
</dbReference>
<dbReference type="HAMAP" id="MF_00050">
    <property type="entry name" value="EF_Ts"/>
    <property type="match status" value="1"/>
</dbReference>
<dbReference type="InterPro" id="IPR036402">
    <property type="entry name" value="EF-Ts_dimer_sf"/>
</dbReference>
<dbReference type="InterPro" id="IPR001816">
    <property type="entry name" value="Transl_elong_EFTs/EF1B"/>
</dbReference>
<dbReference type="InterPro" id="IPR014039">
    <property type="entry name" value="Transl_elong_EFTs/EF1B_dimer"/>
</dbReference>
<dbReference type="InterPro" id="IPR018101">
    <property type="entry name" value="Transl_elong_Ts_CS"/>
</dbReference>
<dbReference type="InterPro" id="IPR009060">
    <property type="entry name" value="UBA-like_sf"/>
</dbReference>
<dbReference type="NCBIfam" id="TIGR00116">
    <property type="entry name" value="tsf"/>
    <property type="match status" value="1"/>
</dbReference>
<dbReference type="PANTHER" id="PTHR11741">
    <property type="entry name" value="ELONGATION FACTOR TS"/>
    <property type="match status" value="1"/>
</dbReference>
<dbReference type="PANTHER" id="PTHR11741:SF0">
    <property type="entry name" value="ELONGATION FACTOR TS, MITOCHONDRIAL"/>
    <property type="match status" value="1"/>
</dbReference>
<dbReference type="Pfam" id="PF00889">
    <property type="entry name" value="EF_TS"/>
    <property type="match status" value="1"/>
</dbReference>
<dbReference type="SUPFAM" id="SSF54713">
    <property type="entry name" value="Elongation factor Ts (EF-Ts), dimerisation domain"/>
    <property type="match status" value="2"/>
</dbReference>
<dbReference type="SUPFAM" id="SSF46934">
    <property type="entry name" value="UBA-like"/>
    <property type="match status" value="1"/>
</dbReference>
<dbReference type="PROSITE" id="PS01127">
    <property type="entry name" value="EF_TS_2"/>
    <property type="match status" value="1"/>
</dbReference>
<gene>
    <name evidence="1" type="primary">tsf</name>
    <name type="ordered locus">Tola_2110</name>
</gene>
<organism>
    <name type="scientific">Tolumonas auensis (strain DSM 9187 / NBRC 110442 / TA 4)</name>
    <dbReference type="NCBI Taxonomy" id="595494"/>
    <lineage>
        <taxon>Bacteria</taxon>
        <taxon>Pseudomonadati</taxon>
        <taxon>Pseudomonadota</taxon>
        <taxon>Gammaproteobacteria</taxon>
        <taxon>Aeromonadales</taxon>
        <taxon>Aeromonadaceae</taxon>
        <taxon>Tolumonas</taxon>
    </lineage>
</organism>
<accession>C4L863</accession>
<sequence>MADITAAMVKELRERTAAGMMDCKKALTEANGDIELAIENMRKSGQAKAAKKAGRIAAEGIIIARSAGNVAVMLELNCETDFVAKDASFRALGEKVAEIALADKIADLEVLKNTDFGNGESVQVTLNNLIAKIGENMNLRRIVIAEGDNLATYIHGSRIGVITKLVGGDADLAKDLAMHVAANSPQFVKPEDVSAEVVAKEREIQVDIAINSGKPKEIAEKMVEGRMKKFTGDISLTGQPFVKDPSVIVADLLKQKGADVQDFIRFEVGEGIEKQETDFAAEVQAQIAAMKG</sequence>
<protein>
    <recommendedName>
        <fullName evidence="1">Elongation factor Ts</fullName>
        <shortName evidence="1">EF-Ts</shortName>
    </recommendedName>
</protein>
<comment type="function">
    <text evidence="1">Associates with the EF-Tu.GDP complex and induces the exchange of GDP to GTP. It remains bound to the aminoacyl-tRNA.EF-Tu.GTP complex up to the GTP hydrolysis stage on the ribosome.</text>
</comment>
<comment type="subcellular location">
    <subcellularLocation>
        <location evidence="1">Cytoplasm</location>
    </subcellularLocation>
</comment>
<comment type="similarity">
    <text evidence="1">Belongs to the EF-Ts family.</text>
</comment>
<reference key="1">
    <citation type="submission" date="2009-05" db="EMBL/GenBank/DDBJ databases">
        <title>Complete sequence of Tolumonas auensis DSM 9187.</title>
        <authorList>
            <consortium name="US DOE Joint Genome Institute"/>
            <person name="Lucas S."/>
            <person name="Copeland A."/>
            <person name="Lapidus A."/>
            <person name="Glavina del Rio T."/>
            <person name="Tice H."/>
            <person name="Bruce D."/>
            <person name="Goodwin L."/>
            <person name="Pitluck S."/>
            <person name="Chertkov O."/>
            <person name="Brettin T."/>
            <person name="Detter J.C."/>
            <person name="Han C."/>
            <person name="Larimer F."/>
            <person name="Land M."/>
            <person name="Hauser L."/>
            <person name="Kyrpides N."/>
            <person name="Mikhailova N."/>
            <person name="Spring S."/>
            <person name="Beller H."/>
        </authorList>
    </citation>
    <scope>NUCLEOTIDE SEQUENCE [LARGE SCALE GENOMIC DNA]</scope>
    <source>
        <strain>DSM 9187 / NBRC 110442 / TA 4</strain>
    </source>
</reference>
<evidence type="ECO:0000255" key="1">
    <source>
        <dbReference type="HAMAP-Rule" id="MF_00050"/>
    </source>
</evidence>
<feature type="chain" id="PRO_1000202255" description="Elongation factor Ts">
    <location>
        <begin position="1"/>
        <end position="292"/>
    </location>
</feature>
<feature type="region of interest" description="Involved in Mg(2+) ion dislocation from EF-Tu" evidence="1">
    <location>
        <begin position="80"/>
        <end position="83"/>
    </location>
</feature>
<proteinExistence type="inferred from homology"/>